<sequence length="403" mass="44274">MASEPPSFPFQRASGMEPPAEFARLRATDPVSKVKLFDGSLAWLVTKYKDVTFVATDERLSKVRTRPGFPELNAGGKQAAKAKPTFVDMDAPDHMNQRGMVESLFTLEHVKKLQPYIQKTVDDLLAAMKKKGCANGPVDLVKEFALPVPSYIIYTILGVPFNDLDHLTNQNAIRTNGSSTAREASAANQELLDYLASLVEKRLEEPKDDLISKLCTEQVKPGNIEKADAVQIAFLLLVAGNATMVNMIALGVVTLFQHPEQLAQLKANPSLAPQFVEELCRYHTASALAIKRTAKVDLEIGGKHIKANEGIIASNQSANRDADIFENPDEFNMNRKWPAEDPLGYGFGPHRCIAEHLAKAELTTVFATLFKEFPDLNIAVPFEKINFTPLGGDVGVVDLPVTF</sequence>
<feature type="chain" id="PRO_0000052040" description="Cytochrome P450 55A2">
    <location>
        <begin position="1"/>
        <end position="403"/>
    </location>
</feature>
<feature type="binding site" description="axial binding residue" evidence="1">
    <location>
        <position position="352"/>
    </location>
    <ligand>
        <name>heme</name>
        <dbReference type="ChEBI" id="CHEBI:30413"/>
    </ligand>
    <ligandPart>
        <name>Fe</name>
        <dbReference type="ChEBI" id="CHEBI:18248"/>
    </ligandPart>
</feature>
<evidence type="ECO:0000250" key="1"/>
<evidence type="ECO:0000305" key="2"/>
<protein>
    <recommendedName>
        <fullName>Cytochrome P450 55A2</fullName>
        <ecNumber>1.14.-.-</ecNumber>
    </recommendedName>
    <alternativeName>
        <fullName>Cytochrome P450NOR1</fullName>
    </alternativeName>
</protein>
<gene>
    <name type="primary">CYP55A2</name>
</gene>
<accession>Q00616</accession>
<name>NOR1_FUSLI</name>
<comment type="cofactor">
    <cofactor evidence="1">
        <name>heme</name>
        <dbReference type="ChEBI" id="CHEBI:30413"/>
    </cofactor>
</comment>
<comment type="similarity">
    <text evidence="2">Belongs to the cytochrome P450 family.</text>
</comment>
<organism>
    <name type="scientific">Fusarium lichenicola</name>
    <name type="common">Cylindrocarpon lichenicola</name>
    <dbReference type="NCBI Taxonomy" id="42744"/>
    <lineage>
        <taxon>Eukaryota</taxon>
        <taxon>Fungi</taxon>
        <taxon>Dikarya</taxon>
        <taxon>Ascomycota</taxon>
        <taxon>Pezizomycotina</taxon>
        <taxon>Sordariomycetes</taxon>
        <taxon>Hypocreomycetidae</taxon>
        <taxon>Hypocreales</taxon>
        <taxon>Nectriaceae</taxon>
        <taxon>Fusarium</taxon>
        <taxon>Fusarium solani species complex</taxon>
    </lineage>
</organism>
<keyword id="KW-0349">Heme</keyword>
<keyword id="KW-0408">Iron</keyword>
<keyword id="KW-0479">Metal-binding</keyword>
<keyword id="KW-0503">Monooxygenase</keyword>
<keyword id="KW-0560">Oxidoreductase</keyword>
<reference key="1">
    <citation type="journal article" date="1996" name="Biochimie">
        <title>Two isozymes of P450nor of Cylindrocarpon tonkinense: molecular cloning of the cDNAs and genes, expressions in the yeast, and the putative NAD(P)H-binding site.</title>
        <authorList>
            <person name="Kudo T."/>
            <person name="Tomura D."/>
            <person name="Liu D.L."/>
            <person name="Dai X.Q."/>
            <person name="Shoun H."/>
        </authorList>
    </citation>
    <scope>NUCLEOTIDE SEQUENCE [GENOMIC DNA]</scope>
    <source>
        <strain>NBRC 30561 / CBS 483.96</strain>
    </source>
</reference>
<dbReference type="EC" id="1.14.-.-"/>
<dbReference type="EMBL" id="D78511">
    <property type="protein sequence ID" value="BAA11408.1"/>
    <property type="molecule type" value="Genomic_DNA"/>
</dbReference>
<dbReference type="SMR" id="Q00616"/>
<dbReference type="BRENDA" id="1.7.2.5">
    <property type="organism ID" value="1783"/>
</dbReference>
<dbReference type="GO" id="GO:0020037">
    <property type="term" value="F:heme binding"/>
    <property type="evidence" value="ECO:0007669"/>
    <property type="project" value="InterPro"/>
</dbReference>
<dbReference type="GO" id="GO:0005506">
    <property type="term" value="F:iron ion binding"/>
    <property type="evidence" value="ECO:0007669"/>
    <property type="project" value="InterPro"/>
</dbReference>
<dbReference type="GO" id="GO:0004497">
    <property type="term" value="F:monooxygenase activity"/>
    <property type="evidence" value="ECO:0007669"/>
    <property type="project" value="UniProtKB-KW"/>
</dbReference>
<dbReference type="GO" id="GO:0016705">
    <property type="term" value="F:oxidoreductase activity, acting on paired donors, with incorporation or reduction of molecular oxygen"/>
    <property type="evidence" value="ECO:0007669"/>
    <property type="project" value="InterPro"/>
</dbReference>
<dbReference type="CDD" id="cd11030">
    <property type="entry name" value="CYP105-like"/>
    <property type="match status" value="1"/>
</dbReference>
<dbReference type="FunFam" id="1.10.630.10:FF:000018">
    <property type="entry name" value="Cytochrome P450 monooxygenase"/>
    <property type="match status" value="1"/>
</dbReference>
<dbReference type="Gene3D" id="1.10.630.10">
    <property type="entry name" value="Cytochrome P450"/>
    <property type="match status" value="1"/>
</dbReference>
<dbReference type="InterPro" id="IPR001128">
    <property type="entry name" value="Cyt_P450"/>
</dbReference>
<dbReference type="InterPro" id="IPR002397">
    <property type="entry name" value="Cyt_P450_B"/>
</dbReference>
<dbReference type="InterPro" id="IPR036396">
    <property type="entry name" value="Cyt_P450_sf"/>
</dbReference>
<dbReference type="PANTHER" id="PTHR46696">
    <property type="entry name" value="P450, PUTATIVE (EUROFUNG)-RELATED"/>
    <property type="match status" value="1"/>
</dbReference>
<dbReference type="PANTHER" id="PTHR46696:SF6">
    <property type="entry name" value="P450, PUTATIVE (EUROFUNG)-RELATED"/>
    <property type="match status" value="1"/>
</dbReference>
<dbReference type="Pfam" id="PF00067">
    <property type="entry name" value="p450"/>
    <property type="match status" value="1"/>
</dbReference>
<dbReference type="PRINTS" id="PR00359">
    <property type="entry name" value="BP450"/>
</dbReference>
<dbReference type="SUPFAM" id="SSF48264">
    <property type="entry name" value="Cytochrome P450"/>
    <property type="match status" value="1"/>
</dbReference>
<proteinExistence type="inferred from homology"/>